<organism>
    <name type="scientific">Methanocaldococcus jannaschii (strain ATCC 43067 / DSM 2661 / JAL-1 / JCM 10045 / NBRC 100440)</name>
    <name type="common">Methanococcus jannaschii</name>
    <dbReference type="NCBI Taxonomy" id="243232"/>
    <lineage>
        <taxon>Archaea</taxon>
        <taxon>Methanobacteriati</taxon>
        <taxon>Methanobacteriota</taxon>
        <taxon>Methanomada group</taxon>
        <taxon>Methanococci</taxon>
        <taxon>Methanococcales</taxon>
        <taxon>Methanocaldococcaceae</taxon>
        <taxon>Methanocaldococcus</taxon>
    </lineage>
</organism>
<proteinExistence type="inferred from homology"/>
<feature type="chain" id="PRO_0000098580" description="Isoleucine--tRNA ligase">
    <location>
        <begin position="1"/>
        <end position="1039"/>
    </location>
</feature>
<feature type="short sequence motif" description="'HIGH' region">
    <location>
        <begin position="46"/>
        <end position="56"/>
    </location>
</feature>
<feature type="short sequence motif" description="'KMSKS' region">
    <location>
        <begin position="600"/>
        <end position="604"/>
    </location>
</feature>
<feature type="binding site" evidence="1">
    <location>
        <position position="603"/>
    </location>
    <ligand>
        <name>ATP</name>
        <dbReference type="ChEBI" id="CHEBI:30616"/>
    </ligand>
</feature>
<comment type="function">
    <text evidence="1">Catalyzes the attachment of isoleucine to tRNA(Ile). As IleRS can inadvertently accommodate and process structurally similar amino acids such as valine, to avoid such errors it has two additional distinct tRNA(Ile)-dependent editing activities. One activity is designated as 'pretransfer' editing and involves the hydrolysis of activated Val-AMP. The other activity is designated 'posttransfer' editing and involves deacylation of mischarged Val-tRNA(Ile).</text>
</comment>
<comment type="catalytic activity">
    <reaction evidence="1">
        <text>tRNA(Ile) + L-isoleucine + ATP = L-isoleucyl-tRNA(Ile) + AMP + diphosphate</text>
        <dbReference type="Rhea" id="RHEA:11060"/>
        <dbReference type="Rhea" id="RHEA-COMP:9666"/>
        <dbReference type="Rhea" id="RHEA-COMP:9695"/>
        <dbReference type="ChEBI" id="CHEBI:30616"/>
        <dbReference type="ChEBI" id="CHEBI:33019"/>
        <dbReference type="ChEBI" id="CHEBI:58045"/>
        <dbReference type="ChEBI" id="CHEBI:78442"/>
        <dbReference type="ChEBI" id="CHEBI:78528"/>
        <dbReference type="ChEBI" id="CHEBI:456215"/>
        <dbReference type="EC" id="6.1.1.5"/>
    </reaction>
</comment>
<comment type="cofactor">
    <cofactor evidence="1">
        <name>Zn(2+)</name>
        <dbReference type="ChEBI" id="CHEBI:29105"/>
    </cofactor>
</comment>
<comment type="subunit">
    <text evidence="1">Monomer.</text>
</comment>
<comment type="subcellular location">
    <subcellularLocation>
        <location evidence="1">Cytoplasm</location>
    </subcellularLocation>
</comment>
<comment type="domain">
    <text evidence="1">IleRS has two distinct active sites: one for aminoacylation and one for editing. The misactivated valine is translocated from the active site to the editing site, which sterically excludes the correctly activated isoleucine. The single editing site contains two valyl binding pockets, one specific for each substrate (Val-AMP or Val-tRNA(Ile)).</text>
</comment>
<comment type="similarity">
    <text evidence="1">Belongs to the class-I aminoacyl-tRNA synthetase family. IleS type 2 subfamily.</text>
</comment>
<dbReference type="EC" id="6.1.1.5" evidence="1"/>
<dbReference type="EMBL" id="L77117">
    <property type="protein sequence ID" value="AAB98949.1"/>
    <property type="molecule type" value="Genomic_DNA"/>
</dbReference>
<dbReference type="PIR" id="C64418">
    <property type="entry name" value="C64418"/>
</dbReference>
<dbReference type="RefSeq" id="WP_010870461.1">
    <property type="nucleotide sequence ID" value="NC_000909.1"/>
</dbReference>
<dbReference type="SMR" id="Q58357"/>
<dbReference type="FunCoup" id="Q58357">
    <property type="interactions" value="243"/>
</dbReference>
<dbReference type="STRING" id="243232.MJ_0947"/>
<dbReference type="PaxDb" id="243232-MJ_0947"/>
<dbReference type="EnsemblBacteria" id="AAB98949">
    <property type="protein sequence ID" value="AAB98949"/>
    <property type="gene ID" value="MJ_0947"/>
</dbReference>
<dbReference type="GeneID" id="1451844"/>
<dbReference type="KEGG" id="mja:MJ_0947"/>
<dbReference type="eggNOG" id="arCOG00807">
    <property type="taxonomic scope" value="Archaea"/>
</dbReference>
<dbReference type="HOGENOM" id="CLU_001493_1_1_2"/>
<dbReference type="InParanoid" id="Q58357"/>
<dbReference type="OrthoDB" id="30823at2157"/>
<dbReference type="PhylomeDB" id="Q58357"/>
<dbReference type="Proteomes" id="UP000000805">
    <property type="component" value="Chromosome"/>
</dbReference>
<dbReference type="GO" id="GO:0005829">
    <property type="term" value="C:cytosol"/>
    <property type="evidence" value="ECO:0000318"/>
    <property type="project" value="GO_Central"/>
</dbReference>
<dbReference type="GO" id="GO:0002161">
    <property type="term" value="F:aminoacyl-tRNA deacylase activity"/>
    <property type="evidence" value="ECO:0007669"/>
    <property type="project" value="InterPro"/>
</dbReference>
<dbReference type="GO" id="GO:0005524">
    <property type="term" value="F:ATP binding"/>
    <property type="evidence" value="ECO:0007669"/>
    <property type="project" value="UniProtKB-UniRule"/>
</dbReference>
<dbReference type="GO" id="GO:0004822">
    <property type="term" value="F:isoleucine-tRNA ligase activity"/>
    <property type="evidence" value="ECO:0000318"/>
    <property type="project" value="GO_Central"/>
</dbReference>
<dbReference type="GO" id="GO:0000049">
    <property type="term" value="F:tRNA binding"/>
    <property type="evidence" value="ECO:0007669"/>
    <property type="project" value="InterPro"/>
</dbReference>
<dbReference type="GO" id="GO:0008270">
    <property type="term" value="F:zinc ion binding"/>
    <property type="evidence" value="ECO:0007669"/>
    <property type="project" value="UniProtKB-UniRule"/>
</dbReference>
<dbReference type="GO" id="GO:0006428">
    <property type="term" value="P:isoleucyl-tRNA aminoacylation"/>
    <property type="evidence" value="ECO:0000318"/>
    <property type="project" value="GO_Central"/>
</dbReference>
<dbReference type="CDD" id="cd07961">
    <property type="entry name" value="Anticodon_Ia_Ile_ABEc"/>
    <property type="match status" value="1"/>
</dbReference>
<dbReference type="CDD" id="cd00818">
    <property type="entry name" value="IleRS_core"/>
    <property type="match status" value="1"/>
</dbReference>
<dbReference type="FunFam" id="1.10.730.10:FF:000083">
    <property type="entry name" value="Isoleucine--tRNA ligase"/>
    <property type="match status" value="1"/>
</dbReference>
<dbReference type="FunFam" id="3.40.50.620:FF:000286">
    <property type="entry name" value="Isoleucine--tRNA ligase"/>
    <property type="match status" value="1"/>
</dbReference>
<dbReference type="Gene3D" id="3.40.50.620">
    <property type="entry name" value="HUPs"/>
    <property type="match status" value="2"/>
</dbReference>
<dbReference type="Gene3D" id="1.10.730.10">
    <property type="entry name" value="Isoleucyl-tRNA Synthetase, Domain 1"/>
    <property type="match status" value="1"/>
</dbReference>
<dbReference type="HAMAP" id="MF_02003">
    <property type="entry name" value="Ile_tRNA_synth_type2"/>
    <property type="match status" value="1"/>
</dbReference>
<dbReference type="InterPro" id="IPR001412">
    <property type="entry name" value="aa-tRNA-synth_I_CS"/>
</dbReference>
<dbReference type="InterPro" id="IPR002300">
    <property type="entry name" value="aa-tRNA-synth_Ia"/>
</dbReference>
<dbReference type="InterPro" id="IPR033709">
    <property type="entry name" value="Anticodon_Ile_ABEc"/>
</dbReference>
<dbReference type="InterPro" id="IPR002301">
    <property type="entry name" value="Ile-tRNA-ligase"/>
</dbReference>
<dbReference type="InterPro" id="IPR023586">
    <property type="entry name" value="Ile-tRNA-ligase_type2"/>
</dbReference>
<dbReference type="InterPro" id="IPR013155">
    <property type="entry name" value="M/V/L/I-tRNA-synth_anticd-bd"/>
</dbReference>
<dbReference type="InterPro" id="IPR014729">
    <property type="entry name" value="Rossmann-like_a/b/a_fold"/>
</dbReference>
<dbReference type="InterPro" id="IPR009080">
    <property type="entry name" value="tRNAsynth_Ia_anticodon-bd"/>
</dbReference>
<dbReference type="InterPro" id="IPR009008">
    <property type="entry name" value="Val/Leu/Ile-tRNA-synth_edit"/>
</dbReference>
<dbReference type="NCBIfam" id="TIGR00392">
    <property type="entry name" value="ileS"/>
    <property type="match status" value="1"/>
</dbReference>
<dbReference type="PANTHER" id="PTHR42780:SF1">
    <property type="entry name" value="ISOLEUCINE--TRNA LIGASE, CYTOPLASMIC"/>
    <property type="match status" value="1"/>
</dbReference>
<dbReference type="PANTHER" id="PTHR42780">
    <property type="entry name" value="SOLEUCYL-TRNA SYNTHETASE"/>
    <property type="match status" value="1"/>
</dbReference>
<dbReference type="Pfam" id="PF08264">
    <property type="entry name" value="Anticodon_1"/>
    <property type="match status" value="1"/>
</dbReference>
<dbReference type="Pfam" id="PF19302">
    <property type="entry name" value="DUF5915"/>
    <property type="match status" value="1"/>
</dbReference>
<dbReference type="Pfam" id="PF00133">
    <property type="entry name" value="tRNA-synt_1"/>
    <property type="match status" value="1"/>
</dbReference>
<dbReference type="PRINTS" id="PR00984">
    <property type="entry name" value="TRNASYNTHILE"/>
</dbReference>
<dbReference type="SUPFAM" id="SSF47323">
    <property type="entry name" value="Anticodon-binding domain of a subclass of class I aminoacyl-tRNA synthetases"/>
    <property type="match status" value="1"/>
</dbReference>
<dbReference type="SUPFAM" id="SSF52374">
    <property type="entry name" value="Nucleotidylyl transferase"/>
    <property type="match status" value="1"/>
</dbReference>
<dbReference type="SUPFAM" id="SSF50677">
    <property type="entry name" value="ValRS/IleRS/LeuRS editing domain"/>
    <property type="match status" value="1"/>
</dbReference>
<dbReference type="PROSITE" id="PS00178">
    <property type="entry name" value="AA_TRNA_LIGASE_I"/>
    <property type="match status" value="1"/>
</dbReference>
<reference key="1">
    <citation type="journal article" date="1996" name="Science">
        <title>Complete genome sequence of the methanogenic archaeon, Methanococcus jannaschii.</title>
        <authorList>
            <person name="Bult C.J."/>
            <person name="White O."/>
            <person name="Olsen G.J."/>
            <person name="Zhou L."/>
            <person name="Fleischmann R.D."/>
            <person name="Sutton G.G."/>
            <person name="Blake J.A."/>
            <person name="FitzGerald L.M."/>
            <person name="Clayton R.A."/>
            <person name="Gocayne J.D."/>
            <person name="Kerlavage A.R."/>
            <person name="Dougherty B.A."/>
            <person name="Tomb J.-F."/>
            <person name="Adams M.D."/>
            <person name="Reich C.I."/>
            <person name="Overbeek R."/>
            <person name="Kirkness E.F."/>
            <person name="Weinstock K.G."/>
            <person name="Merrick J.M."/>
            <person name="Glodek A."/>
            <person name="Scott J.L."/>
            <person name="Geoghagen N.S.M."/>
            <person name="Weidman J.F."/>
            <person name="Fuhrmann J.L."/>
            <person name="Nguyen D."/>
            <person name="Utterback T.R."/>
            <person name="Kelley J.M."/>
            <person name="Peterson J.D."/>
            <person name="Sadow P.W."/>
            <person name="Hanna M.C."/>
            <person name="Cotton M.D."/>
            <person name="Roberts K.M."/>
            <person name="Hurst M.A."/>
            <person name="Kaine B.P."/>
            <person name="Borodovsky M."/>
            <person name="Klenk H.-P."/>
            <person name="Fraser C.M."/>
            <person name="Smith H.O."/>
            <person name="Woese C.R."/>
            <person name="Venter J.C."/>
        </authorList>
    </citation>
    <scope>NUCLEOTIDE SEQUENCE [LARGE SCALE GENOMIC DNA]</scope>
    <source>
        <strain>ATCC 43067 / DSM 2661 / JAL-1 / JCM 10045 / NBRC 100440</strain>
    </source>
</reference>
<name>SYI_METJA</name>
<protein>
    <recommendedName>
        <fullName evidence="1">Isoleucine--tRNA ligase</fullName>
        <ecNumber evidence="1">6.1.1.5</ecNumber>
    </recommendedName>
    <alternativeName>
        <fullName evidence="1">Isoleucyl-tRNA synthetase</fullName>
        <shortName evidence="1">IleRS</shortName>
    </alternativeName>
</protein>
<keyword id="KW-0030">Aminoacyl-tRNA synthetase</keyword>
<keyword id="KW-0067">ATP-binding</keyword>
<keyword id="KW-0963">Cytoplasm</keyword>
<keyword id="KW-0436">Ligase</keyword>
<keyword id="KW-0479">Metal-binding</keyword>
<keyword id="KW-0547">Nucleotide-binding</keyword>
<keyword id="KW-0648">Protein biosynthesis</keyword>
<keyword id="KW-1185">Reference proteome</keyword>
<keyword id="KW-0862">Zinc</keyword>
<gene>
    <name evidence="1" type="primary">ileS</name>
    <name type="ordered locus">MJ0947</name>
</gene>
<accession>Q58357</accession>
<evidence type="ECO:0000255" key="1">
    <source>
        <dbReference type="HAMAP-Rule" id="MF_02003"/>
    </source>
</evidence>
<sequence length="1039" mass="122234">MKKVEPVNFRELDKKIKKFWEENDIYQKVKKKNERNKEFYFVDGPPYCSGAIHLGTAWNKIIKDTYLRFKRMQGYNVLDKAGWDMHGLPIEVKVENEFGIKNKKEIETKIGVKQFIEKCKEFALKHKEIMEKQFKNLGVWLDWENAYMPITKEYMEIGWWTLKVAHEKGLLTRDLRVVYWCPRCETALAEHEVRGEYKEVYDPSVYVKFRLANEENTYIVIWTTTPWTLVANLAVTVHPDYDYAYVEVEFDDKKEVWIIAEKLVEEVINKAKKFHNIKNYKIIKKVKGKELEGIKYIHPLLEENERQKEFAELENAHTVILGEHVTLEGGTGLVHTAPGHGEEDFEVGKKYNLPIYSPIDDEGKYVEGKWKGVFVKDADAEIIETLKNKGLLVYAGKIKHSYPHCWRCKTPLLFRATEQWFLEISKIKDNIIEHAKTVQWIPHWVETRYINGVKFVGDWNISRQRYWGIPIPVWVCEKCGKYIVVGSVEELEEKMINKDEVGEINDLHKPTVDKIKLRCECGGEMKRVPDVLDVWFDSGLAPYASIGVKELKKADFITEGHDQVTKWFYSQHALSAIVFNDIPYKKCLMHGFTLDEHGDKMSKSLGNVVNPDDVVEKYGADLLRFYLLSANKVWEDLRFVWSEMDDVLSLFNTLWNAYMFAVNYMVLDNFKPDEKYFEYLKDEDRWIVSRINSVAKIAIENLEVPYFHTYTWTLKDFILNDLSRWYIRLIRDRTWKEKDDADKLAAYQTLYYVLLKLATILAPVAPHTAEAIYQNLKTEDMEESIFMNKIEVDEEFIDEELERDMAIVRDVVDAIYRGRDRIKYTLRYPLKEITIAGGEEVKKAVERFEYIIKEQGNVKNIKFGEVEGSKYIIKPNYRELGKRYRSEVPKVVEALNKADAKELMERLKEGAVILDGYEIKPEYVEIRLEIPEHIAGVEFSKGTVFINTEITDDLIKEGLMREVIRRIQAMRKDMDLDIEEKIKIKVEGIDLDEFKEIIEREVRGQFVDEIKADYEKDWEIKTPNGEKYNVKIAIERINK</sequence>